<sequence length="370" mass="42415">MKLNTLQLENYRNYDEVTLKCHPDVNILIGENAQGKTNLLESIYTLALAKSHRTSNDKELIRFNADYAKIEGELSYRHGTMPLTMFITKKGKQVKVNHLEQSRLTQYIGHLNVVLFAPEDLNIVKGSPQIRRRFIDMELGQISAVYLNDLAQYQRILKQKNNYLKQLQLGQKKDLTMLEVLNQQFAEYAMKVTDKRAHFIQELESLAKPIHAGITNDKEALSLNYLPSLKFDYAQNEAARLEEIMSILSDNMQREKERGISLFGPHRDDISFDVNGMDAQTYGSQGQQRTTALSIKLAEIELMNIEVGEYPILLLDDVLSELDDSRQTHLLSTIQHKVQTFVTTTSVDGIDHEIMNNAKLYRINQGEIIK</sequence>
<dbReference type="EMBL" id="BA000017">
    <property type="protein sequence ID" value="BAB56166.1"/>
    <property type="molecule type" value="Genomic_DNA"/>
</dbReference>
<dbReference type="RefSeq" id="WP_000775113.1">
    <property type="nucleotide sequence ID" value="NC_002758.2"/>
</dbReference>
<dbReference type="SMR" id="P68861"/>
<dbReference type="KEGG" id="sav:SAV0004"/>
<dbReference type="HOGENOM" id="CLU_040267_0_1_9"/>
<dbReference type="PhylomeDB" id="P68861"/>
<dbReference type="Proteomes" id="UP000002481">
    <property type="component" value="Chromosome"/>
</dbReference>
<dbReference type="GO" id="GO:0005737">
    <property type="term" value="C:cytoplasm"/>
    <property type="evidence" value="ECO:0007669"/>
    <property type="project" value="UniProtKB-SubCell"/>
</dbReference>
<dbReference type="GO" id="GO:0005524">
    <property type="term" value="F:ATP binding"/>
    <property type="evidence" value="ECO:0007669"/>
    <property type="project" value="UniProtKB-UniRule"/>
</dbReference>
<dbReference type="GO" id="GO:0003697">
    <property type="term" value="F:single-stranded DNA binding"/>
    <property type="evidence" value="ECO:0007669"/>
    <property type="project" value="UniProtKB-UniRule"/>
</dbReference>
<dbReference type="GO" id="GO:0006260">
    <property type="term" value="P:DNA replication"/>
    <property type="evidence" value="ECO:0007669"/>
    <property type="project" value="UniProtKB-UniRule"/>
</dbReference>
<dbReference type="GO" id="GO:0000731">
    <property type="term" value="P:DNA synthesis involved in DNA repair"/>
    <property type="evidence" value="ECO:0007669"/>
    <property type="project" value="TreeGrafter"/>
</dbReference>
<dbReference type="GO" id="GO:0006302">
    <property type="term" value="P:double-strand break repair"/>
    <property type="evidence" value="ECO:0007669"/>
    <property type="project" value="TreeGrafter"/>
</dbReference>
<dbReference type="GO" id="GO:0009432">
    <property type="term" value="P:SOS response"/>
    <property type="evidence" value="ECO:0007669"/>
    <property type="project" value="UniProtKB-UniRule"/>
</dbReference>
<dbReference type="CDD" id="cd03242">
    <property type="entry name" value="ABC_RecF"/>
    <property type="match status" value="1"/>
</dbReference>
<dbReference type="FunFam" id="1.20.1050.90:FF:000002">
    <property type="entry name" value="DNA replication and repair protein RecF"/>
    <property type="match status" value="1"/>
</dbReference>
<dbReference type="Gene3D" id="3.40.50.300">
    <property type="entry name" value="P-loop containing nucleotide triphosphate hydrolases"/>
    <property type="match status" value="1"/>
</dbReference>
<dbReference type="Gene3D" id="1.20.1050.90">
    <property type="entry name" value="RecF/RecN/SMC, N-terminal domain"/>
    <property type="match status" value="1"/>
</dbReference>
<dbReference type="HAMAP" id="MF_00365">
    <property type="entry name" value="RecF"/>
    <property type="match status" value="1"/>
</dbReference>
<dbReference type="InterPro" id="IPR001238">
    <property type="entry name" value="DNA-binding_RecF"/>
</dbReference>
<dbReference type="InterPro" id="IPR018078">
    <property type="entry name" value="DNA-binding_RecF_CS"/>
</dbReference>
<dbReference type="InterPro" id="IPR027417">
    <property type="entry name" value="P-loop_NTPase"/>
</dbReference>
<dbReference type="InterPro" id="IPR003395">
    <property type="entry name" value="RecF/RecN/SMC_N"/>
</dbReference>
<dbReference type="InterPro" id="IPR042174">
    <property type="entry name" value="RecF_2"/>
</dbReference>
<dbReference type="NCBIfam" id="TIGR00611">
    <property type="entry name" value="recf"/>
    <property type="match status" value="1"/>
</dbReference>
<dbReference type="PANTHER" id="PTHR32182">
    <property type="entry name" value="DNA REPLICATION AND REPAIR PROTEIN RECF"/>
    <property type="match status" value="1"/>
</dbReference>
<dbReference type="PANTHER" id="PTHR32182:SF0">
    <property type="entry name" value="DNA REPLICATION AND REPAIR PROTEIN RECF"/>
    <property type="match status" value="1"/>
</dbReference>
<dbReference type="Pfam" id="PF02463">
    <property type="entry name" value="SMC_N"/>
    <property type="match status" value="1"/>
</dbReference>
<dbReference type="SUPFAM" id="SSF52540">
    <property type="entry name" value="P-loop containing nucleoside triphosphate hydrolases"/>
    <property type="match status" value="1"/>
</dbReference>
<dbReference type="PROSITE" id="PS00617">
    <property type="entry name" value="RECF_1"/>
    <property type="match status" value="1"/>
</dbReference>
<dbReference type="PROSITE" id="PS00618">
    <property type="entry name" value="RECF_2"/>
    <property type="match status" value="1"/>
</dbReference>
<proteinExistence type="inferred from homology"/>
<protein>
    <recommendedName>
        <fullName>DNA replication and repair protein RecF</fullName>
    </recommendedName>
</protein>
<name>RECF_STAAM</name>
<organism>
    <name type="scientific">Staphylococcus aureus (strain Mu50 / ATCC 700699)</name>
    <dbReference type="NCBI Taxonomy" id="158878"/>
    <lineage>
        <taxon>Bacteria</taxon>
        <taxon>Bacillati</taxon>
        <taxon>Bacillota</taxon>
        <taxon>Bacilli</taxon>
        <taxon>Bacillales</taxon>
        <taxon>Staphylococcaceae</taxon>
        <taxon>Staphylococcus</taxon>
    </lineage>
</organism>
<gene>
    <name type="primary">recF</name>
    <name type="ordered locus">SAV0004</name>
</gene>
<accession>P68861</accession>
<accession>P29232</accession>
<comment type="function">
    <text evidence="1">The RecF protein is involved in DNA metabolism; it is required for DNA replication and normal SOS inducibility. RecF binds preferentially to single-stranded, linear DNA. It also seems to bind ATP (By similarity).</text>
</comment>
<comment type="subcellular location">
    <subcellularLocation>
        <location evidence="1">Cytoplasm</location>
    </subcellularLocation>
</comment>
<comment type="similarity">
    <text evidence="3">Belongs to the RecF family.</text>
</comment>
<feature type="chain" id="PRO_0000196457" description="DNA replication and repair protein RecF">
    <location>
        <begin position="1"/>
        <end position="370"/>
    </location>
</feature>
<feature type="binding site" evidence="2">
    <location>
        <begin position="30"/>
        <end position="37"/>
    </location>
    <ligand>
        <name>ATP</name>
        <dbReference type="ChEBI" id="CHEBI:30616"/>
    </ligand>
</feature>
<keyword id="KW-0067">ATP-binding</keyword>
<keyword id="KW-0963">Cytoplasm</keyword>
<keyword id="KW-0227">DNA damage</keyword>
<keyword id="KW-0234">DNA repair</keyword>
<keyword id="KW-0235">DNA replication</keyword>
<keyword id="KW-0238">DNA-binding</keyword>
<keyword id="KW-0547">Nucleotide-binding</keyword>
<keyword id="KW-0742">SOS response</keyword>
<reference key="1">
    <citation type="journal article" date="2001" name="Lancet">
        <title>Whole genome sequencing of meticillin-resistant Staphylococcus aureus.</title>
        <authorList>
            <person name="Kuroda M."/>
            <person name="Ohta T."/>
            <person name="Uchiyama I."/>
            <person name="Baba T."/>
            <person name="Yuzawa H."/>
            <person name="Kobayashi I."/>
            <person name="Cui L."/>
            <person name="Oguchi A."/>
            <person name="Aoki K."/>
            <person name="Nagai Y."/>
            <person name="Lian J.-Q."/>
            <person name="Ito T."/>
            <person name="Kanamori M."/>
            <person name="Matsumaru H."/>
            <person name="Maruyama A."/>
            <person name="Murakami H."/>
            <person name="Hosoyama A."/>
            <person name="Mizutani-Ui Y."/>
            <person name="Takahashi N.K."/>
            <person name="Sawano T."/>
            <person name="Inoue R."/>
            <person name="Kaito C."/>
            <person name="Sekimizu K."/>
            <person name="Hirakawa H."/>
            <person name="Kuhara S."/>
            <person name="Goto S."/>
            <person name="Yabuzaki J."/>
            <person name="Kanehisa M."/>
            <person name="Yamashita A."/>
            <person name="Oshima K."/>
            <person name="Furuya K."/>
            <person name="Yoshino C."/>
            <person name="Shiba T."/>
            <person name="Hattori M."/>
            <person name="Ogasawara N."/>
            <person name="Hayashi H."/>
            <person name="Hiramatsu K."/>
        </authorList>
    </citation>
    <scope>NUCLEOTIDE SEQUENCE [LARGE SCALE GENOMIC DNA]</scope>
    <source>
        <strain>Mu50 / ATCC 700699</strain>
    </source>
</reference>
<evidence type="ECO:0000250" key="1"/>
<evidence type="ECO:0000255" key="2"/>
<evidence type="ECO:0000305" key="3"/>